<feature type="signal peptide" description="Or 45" evidence="2">
    <location>
        <begin position="1"/>
        <end position="41"/>
    </location>
</feature>
<feature type="propeptide" id="PRO_0000028808" evidence="1">
    <location>
        <begin position="42"/>
        <end position="131"/>
    </location>
</feature>
<feature type="chain" id="PRO_0000028809" description="Matrix metalloproteinase-15">
    <location>
        <begin position="132"/>
        <end position="669"/>
    </location>
</feature>
<feature type="topological domain" description="Extracellular" evidence="2">
    <location>
        <begin position="132"/>
        <end position="625"/>
    </location>
</feature>
<feature type="transmembrane region" description="Helical" evidence="2">
    <location>
        <begin position="626"/>
        <end position="646"/>
    </location>
</feature>
<feature type="topological domain" description="Cytoplasmic" evidence="2">
    <location>
        <begin position="647"/>
        <end position="669"/>
    </location>
</feature>
<feature type="repeat" description="Hemopexin 1">
    <location>
        <begin position="367"/>
        <end position="415"/>
    </location>
</feature>
<feature type="repeat" description="Hemopexin 2">
    <location>
        <begin position="416"/>
        <end position="461"/>
    </location>
</feature>
<feature type="repeat" description="Hemopexin 3">
    <location>
        <begin position="463"/>
        <end position="511"/>
    </location>
</feature>
<feature type="repeat" description="Hemopexin 4">
    <location>
        <begin position="512"/>
        <end position="559"/>
    </location>
</feature>
<feature type="region of interest" description="Disordered" evidence="4">
    <location>
        <begin position="300"/>
        <end position="370"/>
    </location>
</feature>
<feature type="region of interest" description="Disordered" evidence="4">
    <location>
        <begin position="574"/>
        <end position="593"/>
    </location>
</feature>
<feature type="short sequence motif" description="Cysteine switch" evidence="1">
    <location>
        <begin position="109"/>
        <end position="116"/>
    </location>
</feature>
<feature type="compositionally biased region" description="Low complexity" evidence="4">
    <location>
        <begin position="305"/>
        <end position="322"/>
    </location>
</feature>
<feature type="compositionally biased region" description="Pro residues" evidence="4">
    <location>
        <begin position="333"/>
        <end position="342"/>
    </location>
</feature>
<feature type="active site" evidence="3">
    <location>
        <position position="260"/>
    </location>
</feature>
<feature type="binding site" description="in inhibited form" evidence="1">
    <location>
        <position position="111"/>
    </location>
    <ligand>
        <name>Zn(2+)</name>
        <dbReference type="ChEBI" id="CHEBI:29105"/>
        <note>catalytic</note>
    </ligand>
</feature>
<feature type="binding site" evidence="3">
    <location>
        <position position="259"/>
    </location>
    <ligand>
        <name>Zn(2+)</name>
        <dbReference type="ChEBI" id="CHEBI:29105"/>
        <note>catalytic</note>
    </ligand>
</feature>
<feature type="binding site" evidence="3">
    <location>
        <position position="263"/>
    </location>
    <ligand>
        <name>Zn(2+)</name>
        <dbReference type="ChEBI" id="CHEBI:29105"/>
        <note>catalytic</note>
    </ligand>
</feature>
<feature type="binding site" evidence="3">
    <location>
        <position position="269"/>
    </location>
    <ligand>
        <name>Zn(2+)</name>
        <dbReference type="ChEBI" id="CHEBI:29105"/>
        <note>catalytic</note>
    </ligand>
</feature>
<feature type="modified residue" description="Phosphoserine" evidence="10 11">
    <location>
        <position position="589"/>
    </location>
</feature>
<feature type="glycosylation site" description="N-linked (GlcNAc...) asparagine" evidence="2">
    <location>
        <position position="150"/>
    </location>
</feature>
<feature type="disulfide bond" evidence="1">
    <location>
        <begin position="370"/>
        <end position="559"/>
    </location>
</feature>
<feature type="sequence variant" id="VAR_030523" description="In dbSNP:rs41340745." evidence="8">
    <original>L</original>
    <variation>P</variation>
    <location>
        <position position="200"/>
    </location>
</feature>
<feature type="sequence variant" id="VAR_030524" description="In dbSNP:rs41335851." evidence="8">
    <original>P</original>
    <variation>L</variation>
    <location>
        <position position="350"/>
    </location>
</feature>
<feature type="sequence variant" id="VAR_030525" description="In dbSNP:rs41504346." evidence="5 8">
    <original>D</original>
    <variation>G</variation>
    <location>
        <position position="596"/>
    </location>
</feature>
<feature type="sequence variant" id="VAR_020055" description="In dbSNP:rs3743563." evidence="6 8">
    <original>G</original>
    <variation>R</variation>
    <location>
        <position position="609"/>
    </location>
</feature>
<feature type="sequence variant" id="VAR_030526" description="In dbSNP:rs41434246." evidence="8">
    <original>R</original>
    <variation>W</variation>
    <location>
        <position position="622"/>
    </location>
</feature>
<dbReference type="EC" id="3.4.24.-"/>
<dbReference type="EMBL" id="Z48482">
    <property type="protein sequence ID" value="CAA88373.1"/>
    <property type="molecule type" value="mRNA"/>
</dbReference>
<dbReference type="EMBL" id="EF032329">
    <property type="protein sequence ID" value="ABJ53423.1"/>
    <property type="molecule type" value="Genomic_DNA"/>
</dbReference>
<dbReference type="EMBL" id="BC036495">
    <property type="protein sequence ID" value="AAH36495.1"/>
    <property type="molecule type" value="mRNA"/>
</dbReference>
<dbReference type="EMBL" id="BC055428">
    <property type="protein sequence ID" value="AAH55428.1"/>
    <property type="molecule type" value="mRNA"/>
</dbReference>
<dbReference type="EMBL" id="D86331">
    <property type="protein sequence ID" value="BAA13071.1"/>
    <property type="status" value="ALT_INIT"/>
    <property type="molecule type" value="mRNA"/>
</dbReference>
<dbReference type="EMBL" id="D85510">
    <property type="protein sequence ID" value="BAA22225.1"/>
    <property type="molecule type" value="mRNA"/>
</dbReference>
<dbReference type="CCDS" id="CCDS10792.1"/>
<dbReference type="PIR" id="I38029">
    <property type="entry name" value="I38029"/>
</dbReference>
<dbReference type="RefSeq" id="NP_002419.1">
    <property type="nucleotide sequence ID" value="NM_002428.4"/>
</dbReference>
<dbReference type="SMR" id="P51511"/>
<dbReference type="BioGRID" id="110467">
    <property type="interactions" value="49"/>
</dbReference>
<dbReference type="FunCoup" id="P51511">
    <property type="interactions" value="484"/>
</dbReference>
<dbReference type="IntAct" id="P51511">
    <property type="interactions" value="27"/>
</dbReference>
<dbReference type="MINT" id="P51511"/>
<dbReference type="STRING" id="9606.ENSP00000219271"/>
<dbReference type="BindingDB" id="P51511"/>
<dbReference type="ChEMBL" id="CHEMBL2963"/>
<dbReference type="DrugBank" id="DB00786">
    <property type="generic name" value="Marimastat"/>
</dbReference>
<dbReference type="GuidetoPHARMACOLOGY" id="1639"/>
<dbReference type="MEROPS" id="M10.015"/>
<dbReference type="GlyCosmos" id="P51511">
    <property type="glycosylation" value="1 site, No reported glycans"/>
</dbReference>
<dbReference type="GlyGen" id="P51511">
    <property type="glycosylation" value="7 sites, 1 N-linked glycan (1 site), 2 O-linked glycans (6 sites)"/>
</dbReference>
<dbReference type="iPTMnet" id="P51511"/>
<dbReference type="PhosphoSitePlus" id="P51511"/>
<dbReference type="SwissPalm" id="P51511"/>
<dbReference type="BioMuta" id="MMP15"/>
<dbReference type="DMDM" id="1705988"/>
<dbReference type="jPOST" id="P51511"/>
<dbReference type="MassIVE" id="P51511"/>
<dbReference type="PaxDb" id="9606-ENSP00000219271"/>
<dbReference type="PeptideAtlas" id="P51511"/>
<dbReference type="ProteomicsDB" id="56312"/>
<dbReference type="Antibodypedia" id="3619">
    <property type="antibodies" value="480 antibodies from 38 providers"/>
</dbReference>
<dbReference type="DNASU" id="4324"/>
<dbReference type="Ensembl" id="ENST00000219271.4">
    <property type="protein sequence ID" value="ENSP00000219271.3"/>
    <property type="gene ID" value="ENSG00000102996.5"/>
</dbReference>
<dbReference type="GeneID" id="4324"/>
<dbReference type="KEGG" id="hsa:4324"/>
<dbReference type="MANE-Select" id="ENST00000219271.4">
    <property type="protein sequence ID" value="ENSP00000219271.3"/>
    <property type="RefSeq nucleotide sequence ID" value="NM_002428.4"/>
    <property type="RefSeq protein sequence ID" value="NP_002419.1"/>
</dbReference>
<dbReference type="UCSC" id="uc002ena.4">
    <property type="organism name" value="human"/>
</dbReference>
<dbReference type="AGR" id="HGNC:7161"/>
<dbReference type="CTD" id="4324"/>
<dbReference type="DisGeNET" id="4324"/>
<dbReference type="GeneCards" id="MMP15"/>
<dbReference type="HGNC" id="HGNC:7161">
    <property type="gene designation" value="MMP15"/>
</dbReference>
<dbReference type="HPA" id="ENSG00000102996">
    <property type="expression patterns" value="Low tissue specificity"/>
</dbReference>
<dbReference type="MIM" id="602261">
    <property type="type" value="gene"/>
</dbReference>
<dbReference type="neXtProt" id="NX_P51511"/>
<dbReference type="OpenTargets" id="ENSG00000102996"/>
<dbReference type="PharmGKB" id="PA30873"/>
<dbReference type="VEuPathDB" id="HostDB:ENSG00000102996"/>
<dbReference type="eggNOG" id="KOG1565">
    <property type="taxonomic scope" value="Eukaryota"/>
</dbReference>
<dbReference type="GeneTree" id="ENSGT00940000156939"/>
<dbReference type="HOGENOM" id="CLU_015489_8_1_1"/>
<dbReference type="InParanoid" id="P51511"/>
<dbReference type="OMA" id="GCQEHVD"/>
<dbReference type="OrthoDB" id="406838at2759"/>
<dbReference type="PAN-GO" id="P51511">
    <property type="GO annotations" value="3 GO annotations based on evolutionary models"/>
</dbReference>
<dbReference type="PhylomeDB" id="P51511"/>
<dbReference type="TreeFam" id="TF352396"/>
<dbReference type="BRENDA" id="3.4.24.B5">
    <property type="organism ID" value="2681"/>
</dbReference>
<dbReference type="PathwayCommons" id="P51511"/>
<dbReference type="Reactome" id="R-HSA-1442490">
    <property type="pathway name" value="Collagen degradation"/>
</dbReference>
<dbReference type="Reactome" id="R-HSA-1474228">
    <property type="pathway name" value="Degradation of the extracellular matrix"/>
</dbReference>
<dbReference type="Reactome" id="R-HSA-1592389">
    <property type="pathway name" value="Activation of Matrix Metalloproteinases"/>
</dbReference>
<dbReference type="SignaLink" id="P51511"/>
<dbReference type="SIGNOR" id="P51511"/>
<dbReference type="BioGRID-ORCS" id="4324">
    <property type="hits" value="12 hits in 1160 CRISPR screens"/>
</dbReference>
<dbReference type="GeneWiki" id="MMP15"/>
<dbReference type="GenomeRNAi" id="4324"/>
<dbReference type="Pharos" id="P51511">
    <property type="development level" value="Tchem"/>
</dbReference>
<dbReference type="PRO" id="PR:P51511"/>
<dbReference type="Proteomes" id="UP000005640">
    <property type="component" value="Chromosome 16"/>
</dbReference>
<dbReference type="RNAct" id="P51511">
    <property type="molecule type" value="protein"/>
</dbReference>
<dbReference type="Bgee" id="ENSG00000102996">
    <property type="expression patterns" value="Expressed in mucosa of transverse colon and 116 other cell types or tissues"/>
</dbReference>
<dbReference type="ExpressionAtlas" id="P51511">
    <property type="expression patterns" value="baseline and differential"/>
</dbReference>
<dbReference type="GO" id="GO:0031012">
    <property type="term" value="C:extracellular matrix"/>
    <property type="evidence" value="ECO:0007669"/>
    <property type="project" value="InterPro"/>
</dbReference>
<dbReference type="GO" id="GO:0005615">
    <property type="term" value="C:extracellular space"/>
    <property type="evidence" value="ECO:0000318"/>
    <property type="project" value="GO_Central"/>
</dbReference>
<dbReference type="GO" id="GO:0005886">
    <property type="term" value="C:plasma membrane"/>
    <property type="evidence" value="ECO:0000304"/>
    <property type="project" value="Reactome"/>
</dbReference>
<dbReference type="GO" id="GO:0008047">
    <property type="term" value="F:enzyme activator activity"/>
    <property type="evidence" value="ECO:0000304"/>
    <property type="project" value="ProtInc"/>
</dbReference>
<dbReference type="GO" id="GO:0070006">
    <property type="term" value="F:metalloaminopeptidase activity"/>
    <property type="evidence" value="ECO:0000304"/>
    <property type="project" value="ParkinsonsUK-UCL"/>
</dbReference>
<dbReference type="GO" id="GO:0004222">
    <property type="term" value="F:metalloendopeptidase activity"/>
    <property type="evidence" value="ECO:0000318"/>
    <property type="project" value="GO_Central"/>
</dbReference>
<dbReference type="GO" id="GO:0008270">
    <property type="term" value="F:zinc ion binding"/>
    <property type="evidence" value="ECO:0000304"/>
    <property type="project" value="ProtInc"/>
</dbReference>
<dbReference type="GO" id="GO:0030574">
    <property type="term" value="P:collagen catabolic process"/>
    <property type="evidence" value="ECO:0000318"/>
    <property type="project" value="GO_Central"/>
</dbReference>
<dbReference type="GO" id="GO:0035987">
    <property type="term" value="P:endodermal cell differentiation"/>
    <property type="evidence" value="ECO:0000270"/>
    <property type="project" value="UniProtKB"/>
</dbReference>
<dbReference type="GO" id="GO:0022617">
    <property type="term" value="P:extracellular matrix disassembly"/>
    <property type="evidence" value="ECO:0000304"/>
    <property type="project" value="Reactome"/>
</dbReference>
<dbReference type="GO" id="GO:0030198">
    <property type="term" value="P:extracellular matrix organization"/>
    <property type="evidence" value="ECO:0000318"/>
    <property type="project" value="GO_Central"/>
</dbReference>
<dbReference type="GO" id="GO:0036211">
    <property type="term" value="P:protein modification process"/>
    <property type="evidence" value="ECO:0000304"/>
    <property type="project" value="ProtInc"/>
</dbReference>
<dbReference type="GO" id="GO:0006508">
    <property type="term" value="P:proteolysis"/>
    <property type="evidence" value="ECO:0000304"/>
    <property type="project" value="ParkinsonsUK-UCL"/>
</dbReference>
<dbReference type="GO" id="GO:0032355">
    <property type="term" value="P:response to estradiol"/>
    <property type="evidence" value="ECO:0007669"/>
    <property type="project" value="Ensembl"/>
</dbReference>
<dbReference type="CDD" id="cd00094">
    <property type="entry name" value="HX"/>
    <property type="match status" value="1"/>
</dbReference>
<dbReference type="CDD" id="cd04278">
    <property type="entry name" value="ZnMc_MMP"/>
    <property type="match status" value="1"/>
</dbReference>
<dbReference type="FunFam" id="3.40.390.10:FF:000005">
    <property type="entry name" value="Matrix metallopeptidase 16"/>
    <property type="match status" value="1"/>
</dbReference>
<dbReference type="FunFam" id="2.110.10.10:FF:000001">
    <property type="entry name" value="Matrix metallopeptidase 24"/>
    <property type="match status" value="1"/>
</dbReference>
<dbReference type="Gene3D" id="3.40.390.10">
    <property type="entry name" value="Collagenase (Catalytic Domain)"/>
    <property type="match status" value="1"/>
</dbReference>
<dbReference type="Gene3D" id="2.110.10.10">
    <property type="entry name" value="Hemopexin-like domain"/>
    <property type="match status" value="1"/>
</dbReference>
<dbReference type="InterPro" id="IPR000585">
    <property type="entry name" value="Hemopexin-like_dom"/>
</dbReference>
<dbReference type="InterPro" id="IPR036375">
    <property type="entry name" value="Hemopexin-like_dom_sf"/>
</dbReference>
<dbReference type="InterPro" id="IPR018487">
    <property type="entry name" value="Hemopexin-like_repeat"/>
</dbReference>
<dbReference type="InterPro" id="IPR018486">
    <property type="entry name" value="Hemopexin_CS"/>
</dbReference>
<dbReference type="InterPro" id="IPR033739">
    <property type="entry name" value="M10A_MMP"/>
</dbReference>
<dbReference type="InterPro" id="IPR024079">
    <property type="entry name" value="MetalloPept_cat_dom_sf"/>
</dbReference>
<dbReference type="InterPro" id="IPR001818">
    <property type="entry name" value="Pept_M10_metallopeptidase"/>
</dbReference>
<dbReference type="InterPro" id="IPR021190">
    <property type="entry name" value="Pept_M10A"/>
</dbReference>
<dbReference type="InterPro" id="IPR021805">
    <property type="entry name" value="Pept_M10A_metallopeptidase_C"/>
</dbReference>
<dbReference type="InterPro" id="IPR021158">
    <property type="entry name" value="Pept_M10A_Zn_BS"/>
</dbReference>
<dbReference type="InterPro" id="IPR006026">
    <property type="entry name" value="Peptidase_Metallo"/>
</dbReference>
<dbReference type="InterPro" id="IPR002477">
    <property type="entry name" value="Peptidoglycan-bd-like"/>
</dbReference>
<dbReference type="InterPro" id="IPR036365">
    <property type="entry name" value="PGBD-like_sf"/>
</dbReference>
<dbReference type="PANTHER" id="PTHR10201">
    <property type="entry name" value="MATRIX METALLOPROTEINASE"/>
    <property type="match status" value="1"/>
</dbReference>
<dbReference type="PANTHER" id="PTHR10201:SF25">
    <property type="entry name" value="MATRIX METALLOPROTEINASE-15"/>
    <property type="match status" value="1"/>
</dbReference>
<dbReference type="Pfam" id="PF11857">
    <property type="entry name" value="DUF3377"/>
    <property type="match status" value="1"/>
</dbReference>
<dbReference type="Pfam" id="PF00045">
    <property type="entry name" value="Hemopexin"/>
    <property type="match status" value="4"/>
</dbReference>
<dbReference type="Pfam" id="PF00413">
    <property type="entry name" value="Peptidase_M10"/>
    <property type="match status" value="1"/>
</dbReference>
<dbReference type="Pfam" id="PF01471">
    <property type="entry name" value="PG_binding_1"/>
    <property type="match status" value="1"/>
</dbReference>
<dbReference type="PIRSF" id="PIRSF001191">
    <property type="entry name" value="Peptidase_M10A_matrix"/>
    <property type="match status" value="1"/>
</dbReference>
<dbReference type="PRINTS" id="PR00138">
    <property type="entry name" value="MATRIXIN"/>
</dbReference>
<dbReference type="SMART" id="SM00120">
    <property type="entry name" value="HX"/>
    <property type="match status" value="4"/>
</dbReference>
<dbReference type="SMART" id="SM00235">
    <property type="entry name" value="ZnMc"/>
    <property type="match status" value="1"/>
</dbReference>
<dbReference type="SUPFAM" id="SSF50923">
    <property type="entry name" value="Hemopexin-like domain"/>
    <property type="match status" value="1"/>
</dbReference>
<dbReference type="SUPFAM" id="SSF55486">
    <property type="entry name" value="Metalloproteases ('zincins'), catalytic domain"/>
    <property type="match status" value="1"/>
</dbReference>
<dbReference type="SUPFAM" id="SSF47090">
    <property type="entry name" value="PGBD-like"/>
    <property type="match status" value="1"/>
</dbReference>
<dbReference type="PROSITE" id="PS00546">
    <property type="entry name" value="CYSTEINE_SWITCH"/>
    <property type="match status" value="1"/>
</dbReference>
<dbReference type="PROSITE" id="PS00024">
    <property type="entry name" value="HEMOPEXIN"/>
    <property type="match status" value="1"/>
</dbReference>
<dbReference type="PROSITE" id="PS51642">
    <property type="entry name" value="HEMOPEXIN_2"/>
    <property type="match status" value="4"/>
</dbReference>
<dbReference type="PROSITE" id="PS00142">
    <property type="entry name" value="ZINC_PROTEASE"/>
    <property type="match status" value="1"/>
</dbReference>
<comment type="function">
    <text evidence="7">Endopeptidase that degrades various components of the extracellular matrix. May activate progelatinase A.</text>
</comment>
<comment type="cofactor">
    <cofactor evidence="1">
        <name>Zn(2+)</name>
        <dbReference type="ChEBI" id="CHEBI:29105"/>
    </cofactor>
    <text evidence="1">Binds 1 zinc ion per subunit.</text>
</comment>
<comment type="cofactor">
    <cofactor evidence="1">
        <name>Ca(2+)</name>
        <dbReference type="ChEBI" id="CHEBI:29108"/>
    </cofactor>
</comment>
<comment type="interaction">
    <interactant intactId="EBI-1383043">
        <id>P51511</id>
    </interactant>
    <interactant intactId="EBI-1383018">
        <id>P04070</id>
        <label>PROC</label>
    </interactant>
    <organismsDiffer>false</organismsDiffer>
    <experiments>2</experiments>
</comment>
<comment type="subcellular location">
    <subcellularLocation>
        <location evidence="9">Membrane</location>
        <topology evidence="9">Single-pass type I membrane protein</topology>
        <orientation evidence="9">Extracellular side</orientation>
    </subcellularLocation>
</comment>
<comment type="tissue specificity">
    <text>Appeared to be synthesized preferentially in liver, placenta, testis, colon and intestine. Substantial amounts are also detected in pancreas, kidney, lung, heart and skeletal muscle.</text>
</comment>
<comment type="domain">
    <text>The conserved cysteine present in the cysteine-switch motif binds the catalytic zinc ion, thus inhibiting the enzyme. The dissociation of the cysteine from the zinc ion upon the activation-peptide release activates the enzyme.</text>
</comment>
<comment type="PTM">
    <text evidence="1">The precursor is cleaved by a furin endopeptidase.</text>
</comment>
<comment type="similarity">
    <text evidence="9">Belongs to the peptidase M10A family.</text>
</comment>
<comment type="sequence caution" evidence="9">
    <conflict type="erroneous initiation">
        <sequence resource="EMBL-CDS" id="BAA13071"/>
    </conflict>
</comment>
<comment type="online information" name="Atlas of Genetics and Cytogenetics in Oncology and Haematology">
    <link uri="https://atlasgeneticsoncology.org/gene/41392/MMP15"/>
</comment>
<organism>
    <name type="scientific">Homo sapiens</name>
    <name type="common">Human</name>
    <dbReference type="NCBI Taxonomy" id="9606"/>
    <lineage>
        <taxon>Eukaryota</taxon>
        <taxon>Metazoa</taxon>
        <taxon>Chordata</taxon>
        <taxon>Craniata</taxon>
        <taxon>Vertebrata</taxon>
        <taxon>Euteleostomi</taxon>
        <taxon>Mammalia</taxon>
        <taxon>Eutheria</taxon>
        <taxon>Euarchontoglires</taxon>
        <taxon>Primates</taxon>
        <taxon>Haplorrhini</taxon>
        <taxon>Catarrhini</taxon>
        <taxon>Hominidae</taxon>
        <taxon>Homo</taxon>
    </lineage>
</organism>
<name>MMP15_HUMAN</name>
<protein>
    <recommendedName>
        <fullName>Matrix metalloproteinase-15</fullName>
        <shortName>MMP-15</shortName>
        <ecNumber>3.4.24.-</ecNumber>
    </recommendedName>
    <alternativeName>
        <fullName>Membrane-type matrix metalloproteinase 2</fullName>
        <shortName>MT-MMP 2</shortName>
        <shortName>MTMMP2</shortName>
    </alternativeName>
    <alternativeName>
        <fullName>Membrane-type-2 matrix metalloproteinase</fullName>
        <shortName>MT2-MMP</shortName>
        <shortName>MT2MMP</shortName>
    </alternativeName>
    <alternativeName>
        <fullName>SMCP-2</fullName>
    </alternativeName>
</protein>
<evidence type="ECO:0000250" key="1"/>
<evidence type="ECO:0000255" key="2"/>
<evidence type="ECO:0000255" key="3">
    <source>
        <dbReference type="PROSITE-ProRule" id="PRU10095"/>
    </source>
</evidence>
<evidence type="ECO:0000256" key="4">
    <source>
        <dbReference type="SAM" id="MobiDB-lite"/>
    </source>
</evidence>
<evidence type="ECO:0000269" key="5">
    <source>
    </source>
</evidence>
<evidence type="ECO:0000269" key="6">
    <source>
    </source>
</evidence>
<evidence type="ECO:0000269" key="7">
    <source>
    </source>
</evidence>
<evidence type="ECO:0000269" key="8">
    <source ref="2"/>
</evidence>
<evidence type="ECO:0000305" key="9"/>
<evidence type="ECO:0007744" key="10">
    <source>
    </source>
</evidence>
<evidence type="ECO:0007744" key="11">
    <source>
    </source>
</evidence>
<proteinExistence type="evidence at protein level"/>
<keyword id="KW-0106">Calcium</keyword>
<keyword id="KW-0165">Cleavage on pair of basic residues</keyword>
<keyword id="KW-1015">Disulfide bond</keyword>
<keyword id="KW-0325">Glycoprotein</keyword>
<keyword id="KW-0378">Hydrolase</keyword>
<keyword id="KW-0472">Membrane</keyword>
<keyword id="KW-0479">Metal-binding</keyword>
<keyword id="KW-0482">Metalloprotease</keyword>
<keyword id="KW-0597">Phosphoprotein</keyword>
<keyword id="KW-0645">Protease</keyword>
<keyword id="KW-1267">Proteomics identification</keyword>
<keyword id="KW-1185">Reference proteome</keyword>
<keyword id="KW-0677">Repeat</keyword>
<keyword id="KW-0732">Signal</keyword>
<keyword id="KW-0812">Transmembrane</keyword>
<keyword id="KW-1133">Transmembrane helix</keyword>
<keyword id="KW-0862">Zinc</keyword>
<keyword id="KW-0865">Zymogen</keyword>
<gene>
    <name type="primary">MMP15</name>
</gene>
<accession>P51511</accession>
<accession>A0A2U6</accession>
<accession>Q14111</accession>
<sequence length="669" mass="75807">MGSDPSAPGRPGWTGSLLGDREEAARPRLLPLLLVLLGCLGLGVAAEDAEVHAENWLRLYGYLPQPSRHMSTMRSAQILASALAEMQRFYGIPVTGVLDEETKEWMKRPRCGVPDQFGVRVKANLRRRRKRYALTGRKWNNHHLTFSIQNYTEKLGWYHSMEAVRRAFRVWEQATPLVFQEVPYEDIRLRRQKEADIMVLFASGFHGDSSPFDGTGGFLAHAYFPGPGLGGDTHFDADEPWTFSSTDLHGNNLFLVAVHELGHALGLEHSSNPNAIMAPFYQWKDVDNFKLPEDDLRGIQQLYGTPDGQPQPTQPLPTVTPRRPGRPDHRPPRPPQPPPPGGKPERPPKPGPPVQPRATERPDQYGPNICDGDFDTVAMLRGEMFVFKGRWFWRVRHNRVLDNYPMPIGHFWRGLPGDISAAYERQDGRFVFFKGDRYWLFREANLEPGYPQPLTSYGLGIPYDRIDTAIWWEPTGHTFFFQEDRYWRFNEETQRGDPGYPKPISVWQGIPASPKGAFLSNDAAYTYFYKGTKYWKFDNERLRMEPGYPKSILRDFMGCQEHVEPGPRWPDVARPPFNPHGGAEPGADSAEGDVGDGDGDFGAGVNKDGGSRVVVQMEEVARTVNVVMVLVPLLLLLCVLGLTYALVQMQRKGAPRVLLYCKRSLQEWV</sequence>
<reference key="1">
    <citation type="journal article" date="1995" name="Eur. J. Biochem.">
        <title>cDNA sequence and mRNA tissue distribution of a novel human matrix metalloproteinase with a potential transmembrane segment.</title>
        <authorList>
            <person name="Will H."/>
            <person name="Hinzmann B."/>
        </authorList>
    </citation>
    <scope>NUCLEOTIDE SEQUENCE [MRNA]</scope>
    <source>
        <tissue>Lung</tissue>
    </source>
</reference>
<reference key="2">
    <citation type="submission" date="2006-09" db="EMBL/GenBank/DDBJ databases">
        <authorList>
            <consortium name="NIEHS SNPs program"/>
        </authorList>
    </citation>
    <scope>NUCLEOTIDE SEQUENCE [GENOMIC DNA]</scope>
    <scope>VARIANTS PRO-200; LEU-350; GLY-596; ARG-609 AND TRP-622</scope>
</reference>
<reference key="3">
    <citation type="journal article" date="2004" name="Genome Res.">
        <title>The status, quality, and expansion of the NIH full-length cDNA project: the Mammalian Gene Collection (MGC).</title>
        <authorList>
            <consortium name="The MGC Project Team"/>
        </authorList>
    </citation>
    <scope>NUCLEOTIDE SEQUENCE [LARGE SCALE MRNA]</scope>
    <source>
        <tissue>Brain</tissue>
    </source>
</reference>
<reference key="4">
    <citation type="journal article" date="1997" name="Genomics">
        <title>Assignment of the human genes for membrane-type-1, -2, and -3 matrix metalloproteinases (MMP14, MMP15, and MMP16) to 14q12.2, 16q12.2-q21, and 8q21, respectively, by in situ hybridization.</title>
        <authorList>
            <person name="Sato H."/>
            <person name="Tanaka M."/>
            <person name="Takino T."/>
            <person name="Inoue M."/>
            <person name="Seiki M."/>
        </authorList>
    </citation>
    <scope>NUCLEOTIDE SEQUENCE [MRNA] OF 94-669</scope>
    <scope>VARIANT ARG-609</scope>
</reference>
<reference key="5">
    <citation type="submission" date="1996-05" db="EMBL/GenBank/DDBJ databases">
        <authorList>
            <person name="Shofuda K."/>
            <person name="Yasumitsu H."/>
            <person name="Nishihashi A."/>
            <person name="Miki K."/>
            <person name="Miyazaki K."/>
        </authorList>
    </citation>
    <scope>NUCLEOTIDE SEQUENCE [MRNA] OF 163-669</scope>
    <source>
        <tissue>Placenta</tissue>
    </source>
</reference>
<reference key="6">
    <citation type="journal article" date="1997" name="Eur. J. Biochem.">
        <title>Membrane-type matrix metalloproteinases 1 and 2 exhibit broad-spectrum proteolytic capacities comparable to many matrix metalloproteinases.</title>
        <authorList>
            <person name="d'Ortho M.P."/>
            <person name="Will H."/>
            <person name="Atkinson S."/>
            <person name="Butler G."/>
            <person name="Messent A."/>
            <person name="Gavrilovic J."/>
            <person name="Smith B."/>
            <person name="Timpl R."/>
            <person name="Zardi L."/>
            <person name="Murphy G."/>
        </authorList>
    </citation>
    <scope>FUNCTION</scope>
</reference>
<reference key="7">
    <citation type="journal article" date="2008" name="Mol. Cell">
        <title>Kinase-selective enrichment enables quantitative phosphoproteomics of the kinome across the cell cycle.</title>
        <authorList>
            <person name="Daub H."/>
            <person name="Olsen J.V."/>
            <person name="Bairlein M."/>
            <person name="Gnad F."/>
            <person name="Oppermann F.S."/>
            <person name="Korner R."/>
            <person name="Greff Z."/>
            <person name="Keri G."/>
            <person name="Stemmann O."/>
            <person name="Mann M."/>
        </authorList>
    </citation>
    <scope>PHOSPHORYLATION [LARGE SCALE ANALYSIS] AT SER-589</scope>
    <scope>IDENTIFICATION BY MASS SPECTROMETRY [LARGE SCALE ANALYSIS]</scope>
    <source>
        <tissue>Cervix carcinoma</tissue>
    </source>
</reference>
<reference key="8">
    <citation type="journal article" date="2014" name="J. Proteomics">
        <title>An enzyme assisted RP-RPLC approach for in-depth analysis of human liver phosphoproteome.</title>
        <authorList>
            <person name="Bian Y."/>
            <person name="Song C."/>
            <person name="Cheng K."/>
            <person name="Dong M."/>
            <person name="Wang F."/>
            <person name="Huang J."/>
            <person name="Sun D."/>
            <person name="Wang L."/>
            <person name="Ye M."/>
            <person name="Zou H."/>
        </authorList>
    </citation>
    <scope>PHOSPHORYLATION [LARGE SCALE ANALYSIS] AT SER-589</scope>
    <scope>IDENTIFICATION BY MASS SPECTROMETRY [LARGE SCALE ANALYSIS]</scope>
    <source>
        <tissue>Liver</tissue>
    </source>
</reference>
<reference key="9">
    <citation type="journal article" date="2006" name="Science">
        <title>The consensus coding sequences of human breast and colorectal cancers.</title>
        <authorList>
            <person name="Sjoeblom T."/>
            <person name="Jones S."/>
            <person name="Wood L.D."/>
            <person name="Parsons D.W."/>
            <person name="Lin J."/>
            <person name="Barber T.D."/>
            <person name="Mandelker D."/>
            <person name="Leary R.J."/>
            <person name="Ptak J."/>
            <person name="Silliman N."/>
            <person name="Szabo S."/>
            <person name="Buckhaults P."/>
            <person name="Farrell C."/>
            <person name="Meeh P."/>
            <person name="Markowitz S.D."/>
            <person name="Willis J."/>
            <person name="Dawson D."/>
            <person name="Willson J.K.V."/>
            <person name="Gazdar A.F."/>
            <person name="Hartigan J."/>
            <person name="Wu L."/>
            <person name="Liu C."/>
            <person name="Parmigiani G."/>
            <person name="Park B.H."/>
            <person name="Bachman K.E."/>
            <person name="Papadopoulos N."/>
            <person name="Vogelstein B."/>
            <person name="Kinzler K.W."/>
            <person name="Velculescu V.E."/>
        </authorList>
    </citation>
    <scope>VARIANT [LARGE SCALE ANALYSIS] GLY-596</scope>
</reference>